<feature type="chain" id="PRO_1000077876" description="UvrABC system protein B">
    <location>
        <begin position="1"/>
        <end position="688"/>
    </location>
</feature>
<feature type="domain" description="Helicase ATP-binding" evidence="1">
    <location>
        <begin position="31"/>
        <end position="188"/>
    </location>
</feature>
<feature type="domain" description="Helicase C-terminal" evidence="1">
    <location>
        <begin position="434"/>
        <end position="587"/>
    </location>
</feature>
<feature type="domain" description="UVR" evidence="1">
    <location>
        <begin position="642"/>
        <end position="677"/>
    </location>
</feature>
<feature type="region of interest" description="Disordered" evidence="2">
    <location>
        <begin position="607"/>
        <end position="632"/>
    </location>
</feature>
<feature type="short sequence motif" description="Beta-hairpin">
    <location>
        <begin position="97"/>
        <end position="120"/>
    </location>
</feature>
<feature type="binding site" evidence="1">
    <location>
        <begin position="44"/>
        <end position="51"/>
    </location>
    <ligand>
        <name>ATP</name>
        <dbReference type="ChEBI" id="CHEBI:30616"/>
    </ligand>
</feature>
<name>UVRB_CLASE</name>
<proteinExistence type="inferred from homology"/>
<gene>
    <name evidence="1" type="primary">uvrB</name>
    <name type="ordered locus">CMS1994</name>
</gene>
<comment type="function">
    <text evidence="1">The UvrABC repair system catalyzes the recognition and processing of DNA lesions. A damage recognition complex composed of 2 UvrA and 2 UvrB subunits scans DNA for abnormalities. Upon binding of the UvrA(2)B(2) complex to a putative damaged site, the DNA wraps around one UvrB monomer. DNA wrap is dependent on ATP binding by UvrB and probably causes local melting of the DNA helix, facilitating insertion of UvrB beta-hairpin between the DNA strands. Then UvrB probes one DNA strand for the presence of a lesion. If a lesion is found the UvrA subunits dissociate and the UvrB-DNA preincision complex is formed. This complex is subsequently bound by UvrC and the second UvrB is released. If no lesion is found, the DNA wraps around the other UvrB subunit that will check the other stand for damage.</text>
</comment>
<comment type="subunit">
    <text evidence="1">Forms a heterotetramer with UvrA during the search for lesions. Interacts with UvrC in an incision complex.</text>
</comment>
<comment type="subcellular location">
    <subcellularLocation>
        <location evidence="1">Cytoplasm</location>
    </subcellularLocation>
</comment>
<comment type="domain">
    <text evidence="1">The beta-hairpin motif is involved in DNA binding.</text>
</comment>
<comment type="similarity">
    <text evidence="1">Belongs to the UvrB family.</text>
</comment>
<sequence>MQPTRSVRPFKVVSDYSPSGDQPTAIAELAGRVNAGEPDVVLLGATGTGKSATAAWLIEKVQRPTLILAHNKTLAAQLATEFRELMPDNAVEYFVSYYDYYQPEAYVPQTDTFIEKDSSVNAEVERLRHSTTNSLLSRRDVVVVSTVSCIYGLGQPEQYMNAMVALQVGMQINRDTLIRKFVSMQYQRNDVDFSRGNFRVRGDTIEIIPMYEELAIRIEMFGDEIEALYQLHPLTGDVVRKMDAVSVFPGSHYVAETEVMQRAIGTIQQELEERLAVLEREGKLLEAQRLRMRTNFDIEMMQQIGFCSGIENYSRHIDGRDAGEAPHCLLDYFPDDFLVVIDESHVTVPQIGAMFEGDSSRKRTLVEHGFRLPSALDNRPLKWNEFTERVPQTVYMSATPGKYELGMGDGVVEQIIRPTGLIDPAIVVKPTKGQIDDLLEQIRIRVEKDERILVTTLTKKMAEELTDYFAEAGVRVRYLHSDVDTLRRVELLSELRAGVYDVLVGINLLREGLDLPEVSLVAILDADKEGFLRSSTSLIQTIGRAARNVSGEVHMYADVLTDSMKRAIEETDRRREKQVAYNTEHGIDPTPLRKRIADITEILAREGEDTKKMLEGRGGGKRSPTPNLRREGKAAAGANELETIISDLNDQMLQAAGELKFELAARLRDELGDLKRELRQMEKAGHLS</sequence>
<keyword id="KW-0067">ATP-binding</keyword>
<keyword id="KW-0963">Cytoplasm</keyword>
<keyword id="KW-0227">DNA damage</keyword>
<keyword id="KW-0228">DNA excision</keyword>
<keyword id="KW-0234">DNA repair</keyword>
<keyword id="KW-0267">Excision nuclease</keyword>
<keyword id="KW-0347">Helicase</keyword>
<keyword id="KW-0378">Hydrolase</keyword>
<keyword id="KW-0547">Nucleotide-binding</keyword>
<keyword id="KW-0742">SOS response</keyword>
<dbReference type="EMBL" id="AM849034">
    <property type="protein sequence ID" value="CAQ02091.1"/>
    <property type="molecule type" value="Genomic_DNA"/>
</dbReference>
<dbReference type="RefSeq" id="WP_012299322.1">
    <property type="nucleotide sequence ID" value="NZ_MZMN01000003.1"/>
</dbReference>
<dbReference type="SMR" id="B0RES6"/>
<dbReference type="STRING" id="31964.CMS1994"/>
<dbReference type="KEGG" id="cms:CMS1994"/>
<dbReference type="eggNOG" id="COG0556">
    <property type="taxonomic scope" value="Bacteria"/>
</dbReference>
<dbReference type="HOGENOM" id="CLU_009621_2_1_11"/>
<dbReference type="OrthoDB" id="9806651at2"/>
<dbReference type="Proteomes" id="UP000001318">
    <property type="component" value="Chromosome"/>
</dbReference>
<dbReference type="GO" id="GO:0005737">
    <property type="term" value="C:cytoplasm"/>
    <property type="evidence" value="ECO:0007669"/>
    <property type="project" value="UniProtKB-SubCell"/>
</dbReference>
<dbReference type="GO" id="GO:0009380">
    <property type="term" value="C:excinuclease repair complex"/>
    <property type="evidence" value="ECO:0007669"/>
    <property type="project" value="InterPro"/>
</dbReference>
<dbReference type="GO" id="GO:0005524">
    <property type="term" value="F:ATP binding"/>
    <property type="evidence" value="ECO:0007669"/>
    <property type="project" value="UniProtKB-UniRule"/>
</dbReference>
<dbReference type="GO" id="GO:0016887">
    <property type="term" value="F:ATP hydrolysis activity"/>
    <property type="evidence" value="ECO:0007669"/>
    <property type="project" value="InterPro"/>
</dbReference>
<dbReference type="GO" id="GO:0003677">
    <property type="term" value="F:DNA binding"/>
    <property type="evidence" value="ECO:0007669"/>
    <property type="project" value="UniProtKB-UniRule"/>
</dbReference>
<dbReference type="GO" id="GO:0009381">
    <property type="term" value="F:excinuclease ABC activity"/>
    <property type="evidence" value="ECO:0007669"/>
    <property type="project" value="UniProtKB-UniRule"/>
</dbReference>
<dbReference type="GO" id="GO:0004386">
    <property type="term" value="F:helicase activity"/>
    <property type="evidence" value="ECO:0007669"/>
    <property type="project" value="UniProtKB-KW"/>
</dbReference>
<dbReference type="GO" id="GO:0006289">
    <property type="term" value="P:nucleotide-excision repair"/>
    <property type="evidence" value="ECO:0007669"/>
    <property type="project" value="UniProtKB-UniRule"/>
</dbReference>
<dbReference type="GO" id="GO:0009432">
    <property type="term" value="P:SOS response"/>
    <property type="evidence" value="ECO:0007669"/>
    <property type="project" value="UniProtKB-UniRule"/>
</dbReference>
<dbReference type="CDD" id="cd17916">
    <property type="entry name" value="DEXHc_UvrB"/>
    <property type="match status" value="1"/>
</dbReference>
<dbReference type="CDD" id="cd18790">
    <property type="entry name" value="SF2_C_UvrB"/>
    <property type="match status" value="1"/>
</dbReference>
<dbReference type="Gene3D" id="3.40.50.300">
    <property type="entry name" value="P-loop containing nucleotide triphosphate hydrolases"/>
    <property type="match status" value="3"/>
</dbReference>
<dbReference type="Gene3D" id="4.10.860.10">
    <property type="entry name" value="UVR domain"/>
    <property type="match status" value="1"/>
</dbReference>
<dbReference type="HAMAP" id="MF_00204">
    <property type="entry name" value="UvrB"/>
    <property type="match status" value="1"/>
</dbReference>
<dbReference type="InterPro" id="IPR006935">
    <property type="entry name" value="Helicase/UvrB_N"/>
</dbReference>
<dbReference type="InterPro" id="IPR014001">
    <property type="entry name" value="Helicase_ATP-bd"/>
</dbReference>
<dbReference type="InterPro" id="IPR001650">
    <property type="entry name" value="Helicase_C-like"/>
</dbReference>
<dbReference type="InterPro" id="IPR027417">
    <property type="entry name" value="P-loop_NTPase"/>
</dbReference>
<dbReference type="InterPro" id="IPR001943">
    <property type="entry name" value="UVR_dom"/>
</dbReference>
<dbReference type="InterPro" id="IPR036876">
    <property type="entry name" value="UVR_dom_sf"/>
</dbReference>
<dbReference type="InterPro" id="IPR004807">
    <property type="entry name" value="UvrB"/>
</dbReference>
<dbReference type="InterPro" id="IPR041471">
    <property type="entry name" value="UvrB_inter"/>
</dbReference>
<dbReference type="InterPro" id="IPR024759">
    <property type="entry name" value="UvrB_YAD/RRR_dom"/>
</dbReference>
<dbReference type="NCBIfam" id="NF003673">
    <property type="entry name" value="PRK05298.1"/>
    <property type="match status" value="1"/>
</dbReference>
<dbReference type="NCBIfam" id="TIGR00631">
    <property type="entry name" value="uvrb"/>
    <property type="match status" value="1"/>
</dbReference>
<dbReference type="PANTHER" id="PTHR24029">
    <property type="entry name" value="UVRABC SYSTEM PROTEIN B"/>
    <property type="match status" value="1"/>
</dbReference>
<dbReference type="PANTHER" id="PTHR24029:SF0">
    <property type="entry name" value="UVRABC SYSTEM PROTEIN B"/>
    <property type="match status" value="1"/>
</dbReference>
<dbReference type="Pfam" id="PF00271">
    <property type="entry name" value="Helicase_C"/>
    <property type="match status" value="1"/>
</dbReference>
<dbReference type="Pfam" id="PF04851">
    <property type="entry name" value="ResIII"/>
    <property type="match status" value="1"/>
</dbReference>
<dbReference type="Pfam" id="PF02151">
    <property type="entry name" value="UVR"/>
    <property type="match status" value="1"/>
</dbReference>
<dbReference type="Pfam" id="PF12344">
    <property type="entry name" value="UvrB"/>
    <property type="match status" value="1"/>
</dbReference>
<dbReference type="Pfam" id="PF17757">
    <property type="entry name" value="UvrB_inter"/>
    <property type="match status" value="1"/>
</dbReference>
<dbReference type="SMART" id="SM00487">
    <property type="entry name" value="DEXDc"/>
    <property type="match status" value="1"/>
</dbReference>
<dbReference type="SMART" id="SM00490">
    <property type="entry name" value="HELICc"/>
    <property type="match status" value="1"/>
</dbReference>
<dbReference type="SUPFAM" id="SSF46600">
    <property type="entry name" value="C-terminal UvrC-binding domain of UvrB"/>
    <property type="match status" value="1"/>
</dbReference>
<dbReference type="SUPFAM" id="SSF52540">
    <property type="entry name" value="P-loop containing nucleoside triphosphate hydrolases"/>
    <property type="match status" value="2"/>
</dbReference>
<dbReference type="PROSITE" id="PS51192">
    <property type="entry name" value="HELICASE_ATP_BIND_1"/>
    <property type="match status" value="1"/>
</dbReference>
<dbReference type="PROSITE" id="PS51194">
    <property type="entry name" value="HELICASE_CTER"/>
    <property type="match status" value="1"/>
</dbReference>
<dbReference type="PROSITE" id="PS50151">
    <property type="entry name" value="UVR"/>
    <property type="match status" value="1"/>
</dbReference>
<evidence type="ECO:0000255" key="1">
    <source>
        <dbReference type="HAMAP-Rule" id="MF_00204"/>
    </source>
</evidence>
<evidence type="ECO:0000256" key="2">
    <source>
        <dbReference type="SAM" id="MobiDB-lite"/>
    </source>
</evidence>
<organism>
    <name type="scientific">Clavibacter sepedonicus</name>
    <name type="common">Clavibacter michiganensis subsp. sepedonicus</name>
    <dbReference type="NCBI Taxonomy" id="31964"/>
    <lineage>
        <taxon>Bacteria</taxon>
        <taxon>Bacillati</taxon>
        <taxon>Actinomycetota</taxon>
        <taxon>Actinomycetes</taxon>
        <taxon>Micrococcales</taxon>
        <taxon>Microbacteriaceae</taxon>
        <taxon>Clavibacter</taxon>
    </lineage>
</organism>
<accession>B0RES6</accession>
<reference key="1">
    <citation type="journal article" date="2008" name="J. Bacteriol.">
        <title>Genome of the actinomycete plant pathogen Clavibacter michiganensis subsp. sepedonicus suggests recent niche adaptation.</title>
        <authorList>
            <person name="Bentley S.D."/>
            <person name="Corton C."/>
            <person name="Brown S.E."/>
            <person name="Barron A."/>
            <person name="Clark L."/>
            <person name="Doggett J."/>
            <person name="Harris B."/>
            <person name="Ormond D."/>
            <person name="Quail M.A."/>
            <person name="May G."/>
            <person name="Francis D."/>
            <person name="Knudson D."/>
            <person name="Parkhill J."/>
            <person name="Ishimaru C.A."/>
        </authorList>
    </citation>
    <scope>NUCLEOTIDE SEQUENCE [LARGE SCALE GENOMIC DNA]</scope>
    <source>
        <strain>ATCC 33113 / DSM 20744 / JCM 9667 / LMG 2889 / ICMP 2535 / C-1</strain>
    </source>
</reference>
<protein>
    <recommendedName>
        <fullName evidence="1">UvrABC system protein B</fullName>
        <shortName evidence="1">Protein UvrB</shortName>
    </recommendedName>
    <alternativeName>
        <fullName evidence="1">Excinuclease ABC subunit B</fullName>
    </alternativeName>
</protein>